<dbReference type="EC" id="3.1.1.45"/>
<dbReference type="EMBL" id="AL513382">
    <property type="protein sequence ID" value="CAD07925.1"/>
    <property type="molecule type" value="Genomic_DNA"/>
</dbReference>
<dbReference type="EMBL" id="AE014613">
    <property type="protein sequence ID" value="AAO70858.1"/>
    <property type="molecule type" value="Genomic_DNA"/>
</dbReference>
<dbReference type="RefSeq" id="NP_457784.1">
    <property type="nucleotide sequence ID" value="NC_003198.1"/>
</dbReference>
<dbReference type="SMR" id="Q8Z3B8"/>
<dbReference type="STRING" id="220341.gene:17587444"/>
<dbReference type="ESTHER" id="salty-DLHH">
    <property type="family name" value="Dienelactone_hydrolase"/>
</dbReference>
<dbReference type="KEGG" id="stt:t3330"/>
<dbReference type="KEGG" id="sty:STY3592"/>
<dbReference type="PATRIC" id="fig|220341.7.peg.3659"/>
<dbReference type="eggNOG" id="COG0412">
    <property type="taxonomic scope" value="Bacteria"/>
</dbReference>
<dbReference type="HOGENOM" id="CLU_054590_7_0_6"/>
<dbReference type="OMA" id="QCGAKHI"/>
<dbReference type="Proteomes" id="UP000000541">
    <property type="component" value="Chromosome"/>
</dbReference>
<dbReference type="Proteomes" id="UP000002670">
    <property type="component" value="Chromosome"/>
</dbReference>
<dbReference type="GO" id="GO:0008806">
    <property type="term" value="F:carboxymethylenebutenolidase activity"/>
    <property type="evidence" value="ECO:0007669"/>
    <property type="project" value="UniProtKB-EC"/>
</dbReference>
<dbReference type="Gene3D" id="3.40.50.1820">
    <property type="entry name" value="alpha/beta hydrolase"/>
    <property type="match status" value="1"/>
</dbReference>
<dbReference type="InterPro" id="IPR029058">
    <property type="entry name" value="AB_hydrolase_fold"/>
</dbReference>
<dbReference type="InterPro" id="IPR002925">
    <property type="entry name" value="Dienelactn_hydro"/>
</dbReference>
<dbReference type="InterPro" id="IPR051049">
    <property type="entry name" value="Dienelactone_hydrolase-like"/>
</dbReference>
<dbReference type="PANTHER" id="PTHR46623:SF6">
    <property type="entry name" value="ALPHA_BETA-HYDROLASES SUPERFAMILY PROTEIN"/>
    <property type="match status" value="1"/>
</dbReference>
<dbReference type="PANTHER" id="PTHR46623">
    <property type="entry name" value="CARBOXYMETHYLENEBUTENOLIDASE-RELATED"/>
    <property type="match status" value="1"/>
</dbReference>
<dbReference type="Pfam" id="PF01738">
    <property type="entry name" value="DLH"/>
    <property type="match status" value="1"/>
</dbReference>
<dbReference type="SUPFAM" id="SSF53474">
    <property type="entry name" value="alpha/beta-Hydrolases"/>
    <property type="match status" value="1"/>
</dbReference>
<comment type="catalytic activity">
    <reaction>
        <text>2-(5-oxo-2,5-dihydrofuran-2-ylidene)acetate + H2O = 4-oxohex-2-enedioate + H(+)</text>
        <dbReference type="Rhea" id="RHEA:12372"/>
        <dbReference type="ChEBI" id="CHEBI:12040"/>
        <dbReference type="ChEBI" id="CHEBI:15377"/>
        <dbReference type="ChEBI" id="CHEBI:15378"/>
        <dbReference type="ChEBI" id="CHEBI:57263"/>
        <dbReference type="EC" id="3.1.1.45"/>
    </reaction>
</comment>
<comment type="similarity">
    <text evidence="2">Belongs to the dienelactone hydrolase family.</text>
</comment>
<organism>
    <name type="scientific">Salmonella typhi</name>
    <dbReference type="NCBI Taxonomy" id="90370"/>
    <lineage>
        <taxon>Bacteria</taxon>
        <taxon>Pseudomonadati</taxon>
        <taxon>Pseudomonadota</taxon>
        <taxon>Gammaproteobacteria</taxon>
        <taxon>Enterobacterales</taxon>
        <taxon>Enterobacteriaceae</taxon>
        <taxon>Salmonella</taxon>
    </lineage>
</organism>
<proteinExistence type="inferred from homology"/>
<reference key="1">
    <citation type="journal article" date="2001" name="Nature">
        <title>Complete genome sequence of a multiple drug resistant Salmonella enterica serovar Typhi CT18.</title>
        <authorList>
            <person name="Parkhill J."/>
            <person name="Dougan G."/>
            <person name="James K.D."/>
            <person name="Thomson N.R."/>
            <person name="Pickard D."/>
            <person name="Wain J."/>
            <person name="Churcher C.M."/>
            <person name="Mungall K.L."/>
            <person name="Bentley S.D."/>
            <person name="Holden M.T.G."/>
            <person name="Sebaihia M."/>
            <person name="Baker S."/>
            <person name="Basham D."/>
            <person name="Brooks K."/>
            <person name="Chillingworth T."/>
            <person name="Connerton P."/>
            <person name="Cronin A."/>
            <person name="Davis P."/>
            <person name="Davies R.M."/>
            <person name="Dowd L."/>
            <person name="White N."/>
            <person name="Farrar J."/>
            <person name="Feltwell T."/>
            <person name="Hamlin N."/>
            <person name="Haque A."/>
            <person name="Hien T.T."/>
            <person name="Holroyd S."/>
            <person name="Jagels K."/>
            <person name="Krogh A."/>
            <person name="Larsen T.S."/>
            <person name="Leather S."/>
            <person name="Moule S."/>
            <person name="O'Gaora P."/>
            <person name="Parry C."/>
            <person name="Quail M.A."/>
            <person name="Rutherford K.M."/>
            <person name="Simmonds M."/>
            <person name="Skelton J."/>
            <person name="Stevens K."/>
            <person name="Whitehead S."/>
            <person name="Barrell B.G."/>
        </authorList>
    </citation>
    <scope>NUCLEOTIDE SEQUENCE [LARGE SCALE GENOMIC DNA]</scope>
    <source>
        <strain>CT18</strain>
    </source>
</reference>
<reference key="2">
    <citation type="journal article" date="2003" name="J. Bacteriol.">
        <title>Comparative genomics of Salmonella enterica serovar Typhi strains Ty2 and CT18.</title>
        <authorList>
            <person name="Deng W."/>
            <person name="Liou S.-R."/>
            <person name="Plunkett G. III"/>
            <person name="Mayhew G.F."/>
            <person name="Rose D.J."/>
            <person name="Burland V."/>
            <person name="Kodoyianni V."/>
            <person name="Schwartz D.C."/>
            <person name="Blattner F.R."/>
        </authorList>
    </citation>
    <scope>NUCLEOTIDE SEQUENCE [LARGE SCALE GENOMIC DNA]</scope>
    <source>
        <strain>ATCC 700931 / Ty2</strain>
    </source>
</reference>
<keyword id="KW-0378">Hydrolase</keyword>
<accession>Q8Z3B8</accession>
<name>DLHH_SALTI</name>
<evidence type="ECO:0000250" key="1"/>
<evidence type="ECO:0000305" key="2"/>
<sequence length="270" mass="29092">MTTTHPSGFAPAASPLAPTMIHTPDGAISAGITSIPSQGDDMPAYYARPKASDGALPVVIVVQEIFGVHEHIRDICRRLALEGYLAIAPELYFREGDPNDFADIPTLLSGLVAKVPDSQVLADLDHVASWASRNGGDAHRLMITGFCWGGRITWLYAAHNPQLKAAVAWYGKLVGDTSLNSPKHPVDIATDLNAPVLGLYSGQDTSIPQESVETMRQALRAANAKAEIVVYPDAGHAFNADYRPGYHEASAKDGWQRMLEWFAQYGGKKG</sequence>
<protein>
    <recommendedName>
        <fullName>Putative carboxymethylenebutenolidase</fullName>
        <ecNumber>3.1.1.45</ecNumber>
    </recommendedName>
    <alternativeName>
        <fullName>Dienelactone hydrolase</fullName>
        <shortName>DLH</shortName>
    </alternativeName>
</protein>
<feature type="chain" id="PRO_0000161580" description="Putative carboxymethylenebutenolidase">
    <location>
        <begin position="1"/>
        <end position="270"/>
    </location>
</feature>
<feature type="active site" evidence="1">
    <location>
        <position position="147"/>
    </location>
</feature>
<feature type="active site" evidence="1">
    <location>
        <position position="204"/>
    </location>
</feature>
<feature type="active site" evidence="1">
    <location>
        <position position="236"/>
    </location>
</feature>
<feature type="sequence conflict" description="In Ref. 2; AAO70858." evidence="2" ref="2">
    <original>S</original>
    <variation>G</variation>
    <location>
        <position position="201"/>
    </location>
</feature>
<gene>
    <name type="primary">ysgA</name>
    <name type="ordered locus">STY3592</name>
    <name type="ordered locus">t3330</name>
</gene>